<name>RNZ_ACAM1</name>
<feature type="chain" id="PRO_1000088329" description="Ribonuclease Z">
    <location>
        <begin position="1"/>
        <end position="314"/>
    </location>
</feature>
<feature type="active site" description="Proton acceptor" evidence="1">
    <location>
        <position position="66"/>
    </location>
</feature>
<feature type="binding site" evidence="1">
    <location>
        <position position="62"/>
    </location>
    <ligand>
        <name>Zn(2+)</name>
        <dbReference type="ChEBI" id="CHEBI:29105"/>
        <label>1</label>
        <note>catalytic</note>
    </ligand>
</feature>
<feature type="binding site" evidence="1">
    <location>
        <position position="64"/>
    </location>
    <ligand>
        <name>Zn(2+)</name>
        <dbReference type="ChEBI" id="CHEBI:29105"/>
        <label>1</label>
        <note>catalytic</note>
    </ligand>
</feature>
<feature type="binding site" evidence="1">
    <location>
        <position position="66"/>
    </location>
    <ligand>
        <name>Zn(2+)</name>
        <dbReference type="ChEBI" id="CHEBI:29105"/>
        <label>2</label>
        <note>catalytic</note>
    </ligand>
</feature>
<feature type="binding site" evidence="1">
    <location>
        <position position="67"/>
    </location>
    <ligand>
        <name>Zn(2+)</name>
        <dbReference type="ChEBI" id="CHEBI:29105"/>
        <label>2</label>
        <note>catalytic</note>
    </ligand>
</feature>
<feature type="binding site" evidence="1">
    <location>
        <position position="139"/>
    </location>
    <ligand>
        <name>Zn(2+)</name>
        <dbReference type="ChEBI" id="CHEBI:29105"/>
        <label>1</label>
        <note>catalytic</note>
    </ligand>
</feature>
<feature type="binding site" evidence="1">
    <location>
        <position position="210"/>
    </location>
    <ligand>
        <name>Zn(2+)</name>
        <dbReference type="ChEBI" id="CHEBI:29105"/>
        <label>1</label>
        <note>catalytic</note>
    </ligand>
</feature>
<feature type="binding site" evidence="1">
    <location>
        <position position="210"/>
    </location>
    <ligand>
        <name>Zn(2+)</name>
        <dbReference type="ChEBI" id="CHEBI:29105"/>
        <label>2</label>
        <note>catalytic</note>
    </ligand>
</feature>
<feature type="binding site" evidence="1">
    <location>
        <position position="268"/>
    </location>
    <ligand>
        <name>Zn(2+)</name>
        <dbReference type="ChEBI" id="CHEBI:29105"/>
        <label>2</label>
        <note>catalytic</note>
    </ligand>
</feature>
<keyword id="KW-0255">Endonuclease</keyword>
<keyword id="KW-0378">Hydrolase</keyword>
<keyword id="KW-0479">Metal-binding</keyword>
<keyword id="KW-0540">Nuclease</keyword>
<keyword id="KW-1185">Reference proteome</keyword>
<keyword id="KW-0819">tRNA processing</keyword>
<keyword id="KW-0862">Zinc</keyword>
<comment type="function">
    <text evidence="1">Zinc phosphodiesterase, which displays some tRNA 3'-processing endonuclease activity. Probably involved in tRNA maturation, by removing a 3'-trailer from precursor tRNA.</text>
</comment>
<comment type="catalytic activity">
    <reaction evidence="1">
        <text>Endonucleolytic cleavage of RNA, removing extra 3' nucleotides from tRNA precursor, generating 3' termini of tRNAs. A 3'-hydroxy group is left at the tRNA terminus and a 5'-phosphoryl group is left at the trailer molecule.</text>
        <dbReference type="EC" id="3.1.26.11"/>
    </reaction>
</comment>
<comment type="cofactor">
    <cofactor evidence="1">
        <name>Zn(2+)</name>
        <dbReference type="ChEBI" id="CHEBI:29105"/>
    </cofactor>
    <text evidence="1">Binds 2 Zn(2+) ions.</text>
</comment>
<comment type="subunit">
    <text evidence="1">Homodimer.</text>
</comment>
<comment type="similarity">
    <text evidence="1">Belongs to the RNase Z family.</text>
</comment>
<evidence type="ECO:0000255" key="1">
    <source>
        <dbReference type="HAMAP-Rule" id="MF_01818"/>
    </source>
</evidence>
<gene>
    <name evidence="1" type="primary">rnz</name>
    <name type="ordered locus">AM1_5543</name>
</gene>
<organism>
    <name type="scientific">Acaryochloris marina (strain MBIC 11017)</name>
    <dbReference type="NCBI Taxonomy" id="329726"/>
    <lineage>
        <taxon>Bacteria</taxon>
        <taxon>Bacillati</taxon>
        <taxon>Cyanobacteriota</taxon>
        <taxon>Cyanophyceae</taxon>
        <taxon>Acaryochloridales</taxon>
        <taxon>Acaryochloridaceae</taxon>
        <taxon>Acaryochloris</taxon>
    </lineage>
</organism>
<reference key="1">
    <citation type="journal article" date="2008" name="Proc. Natl. Acad. Sci. U.S.A.">
        <title>Niche adaptation and genome expansion in the chlorophyll d-producing cyanobacterium Acaryochloris marina.</title>
        <authorList>
            <person name="Swingley W.D."/>
            <person name="Chen M."/>
            <person name="Cheung P.C."/>
            <person name="Conrad A.L."/>
            <person name="Dejesa L.C."/>
            <person name="Hao J."/>
            <person name="Honchak B.M."/>
            <person name="Karbach L.E."/>
            <person name="Kurdoglu A."/>
            <person name="Lahiri S."/>
            <person name="Mastrian S.D."/>
            <person name="Miyashita H."/>
            <person name="Page L."/>
            <person name="Ramakrishna P."/>
            <person name="Satoh S."/>
            <person name="Sattley W.M."/>
            <person name="Shimada Y."/>
            <person name="Taylor H.L."/>
            <person name="Tomo T."/>
            <person name="Tsuchiya T."/>
            <person name="Wang Z.T."/>
            <person name="Raymond J."/>
            <person name="Mimuro M."/>
            <person name="Blankenship R.E."/>
            <person name="Touchman J.W."/>
        </authorList>
    </citation>
    <scope>NUCLEOTIDE SEQUENCE [LARGE SCALE GENOMIC DNA]</scope>
    <source>
        <strain>MBIC 11017</strain>
    </source>
</reference>
<dbReference type="EC" id="3.1.26.11" evidence="1"/>
<dbReference type="EMBL" id="CP000828">
    <property type="protein sequence ID" value="ABW30497.1"/>
    <property type="molecule type" value="Genomic_DNA"/>
</dbReference>
<dbReference type="RefSeq" id="WP_012165722.1">
    <property type="nucleotide sequence ID" value="NC_009925.1"/>
</dbReference>
<dbReference type="SMR" id="B0CE23"/>
<dbReference type="STRING" id="329726.AM1_5543"/>
<dbReference type="KEGG" id="amr:AM1_5543"/>
<dbReference type="eggNOG" id="COG1234">
    <property type="taxonomic scope" value="Bacteria"/>
</dbReference>
<dbReference type="HOGENOM" id="CLU_031317_2_0_3"/>
<dbReference type="OrthoDB" id="9800940at2"/>
<dbReference type="Proteomes" id="UP000000268">
    <property type="component" value="Chromosome"/>
</dbReference>
<dbReference type="GO" id="GO:0042781">
    <property type="term" value="F:3'-tRNA processing endoribonuclease activity"/>
    <property type="evidence" value="ECO:0007669"/>
    <property type="project" value="UniProtKB-UniRule"/>
</dbReference>
<dbReference type="GO" id="GO:0008270">
    <property type="term" value="F:zinc ion binding"/>
    <property type="evidence" value="ECO:0007669"/>
    <property type="project" value="UniProtKB-UniRule"/>
</dbReference>
<dbReference type="CDD" id="cd07717">
    <property type="entry name" value="RNaseZ_ZiPD-like_MBL-fold"/>
    <property type="match status" value="1"/>
</dbReference>
<dbReference type="FunFam" id="3.60.15.10:FF:000002">
    <property type="entry name" value="Ribonuclease Z"/>
    <property type="match status" value="1"/>
</dbReference>
<dbReference type="Gene3D" id="3.60.15.10">
    <property type="entry name" value="Ribonuclease Z/Hydroxyacylglutathione hydrolase-like"/>
    <property type="match status" value="1"/>
</dbReference>
<dbReference type="HAMAP" id="MF_01818">
    <property type="entry name" value="RNase_Z_BN"/>
    <property type="match status" value="1"/>
</dbReference>
<dbReference type="InterPro" id="IPR001279">
    <property type="entry name" value="Metallo-B-lactamas"/>
</dbReference>
<dbReference type="InterPro" id="IPR036866">
    <property type="entry name" value="RibonucZ/Hydroxyglut_hydro"/>
</dbReference>
<dbReference type="InterPro" id="IPR013471">
    <property type="entry name" value="RNase_Z/BN"/>
</dbReference>
<dbReference type="NCBIfam" id="NF000801">
    <property type="entry name" value="PRK00055.1-3"/>
    <property type="match status" value="1"/>
</dbReference>
<dbReference type="NCBIfam" id="TIGR02651">
    <property type="entry name" value="RNase_Z"/>
    <property type="match status" value="1"/>
</dbReference>
<dbReference type="PANTHER" id="PTHR46018">
    <property type="entry name" value="ZINC PHOSPHODIESTERASE ELAC PROTEIN 1"/>
    <property type="match status" value="1"/>
</dbReference>
<dbReference type="PANTHER" id="PTHR46018:SF2">
    <property type="entry name" value="ZINC PHOSPHODIESTERASE ELAC PROTEIN 1"/>
    <property type="match status" value="1"/>
</dbReference>
<dbReference type="Pfam" id="PF12706">
    <property type="entry name" value="Lactamase_B_2"/>
    <property type="match status" value="2"/>
</dbReference>
<dbReference type="SUPFAM" id="SSF56281">
    <property type="entry name" value="Metallo-hydrolase/oxidoreductase"/>
    <property type="match status" value="1"/>
</dbReference>
<accession>B0CE23</accession>
<protein>
    <recommendedName>
        <fullName evidence="1">Ribonuclease Z</fullName>
        <shortName evidence="1">RNase Z</shortName>
        <ecNumber evidence="1">3.1.26.11</ecNumber>
    </recommendedName>
    <alternativeName>
        <fullName evidence="1">tRNA 3 endonuclease</fullName>
    </alternativeName>
    <alternativeName>
        <fullName evidence="1">tRNase Z</fullName>
    </alternativeName>
</protein>
<sequence length="314" mass="35053">MQITFLGTSSGVPTRSRNVSSVALRLPQRAEIWLFDCGEGTQHQLLRSELKSSQLRRIFITHMHGDHIFGLMGLLASCGLAGNTERIDIYGPAGLEEYLQACRRYSQTHFSYPIQVHTVQPGEVFSDQDYSVVCAPLKHRVPAFGYRIQECDRPGRFDTDKAISMGIPAGPLYGRLKRGERITLPDGRTFFGQDFCGPKEIGRKIAYCTDTIYCPEAVELSRDADVVIHESTFSHQEAELAYQRLHSTSTMAAQVAQAAGAKKLFLTHFSPRYAPNSATGLQELLTEASAIFPHTELAYDFLNYQVPRRTLTTA</sequence>
<proteinExistence type="inferred from homology"/>